<sequence>MPRKGPVAKRDVLPDPMYNSKLVTRLINKMMVDGKKGKSQTILYNAFEIVRERSDKEPMEVFEQALKNIMPVLEVRARRVGGANYQVPVEVRPERRTTLGLRWLVNYARLRGEKTMEERLAYEILDASNNAGAAVKKREDTHKMAEANKAFAHYRW</sequence>
<protein>
    <recommendedName>
        <fullName evidence="1">Small ribosomal subunit protein uS7</fullName>
    </recommendedName>
    <alternativeName>
        <fullName evidence="2">30S ribosomal protein S7</fullName>
    </alternativeName>
</protein>
<name>RS7_BACMK</name>
<feature type="chain" id="PRO_1000125896" description="Small ribosomal subunit protein uS7">
    <location>
        <begin position="1"/>
        <end position="156"/>
    </location>
</feature>
<proteinExistence type="inferred from homology"/>
<organism>
    <name type="scientific">Bacillus mycoides (strain KBAB4)</name>
    <name type="common">Bacillus weihenstephanensis</name>
    <dbReference type="NCBI Taxonomy" id="315730"/>
    <lineage>
        <taxon>Bacteria</taxon>
        <taxon>Bacillati</taxon>
        <taxon>Bacillota</taxon>
        <taxon>Bacilli</taxon>
        <taxon>Bacillales</taxon>
        <taxon>Bacillaceae</taxon>
        <taxon>Bacillus</taxon>
        <taxon>Bacillus cereus group</taxon>
    </lineage>
</organism>
<accession>A9VP73</accession>
<comment type="function">
    <text evidence="1">One of the primary rRNA binding proteins, it binds directly to 16S rRNA where it nucleates assembly of the head domain of the 30S subunit. Is located at the subunit interface close to the decoding center, probably blocks exit of the E-site tRNA.</text>
</comment>
<comment type="subunit">
    <text evidence="1">Part of the 30S ribosomal subunit. Contacts proteins S9 and S11.</text>
</comment>
<comment type="similarity">
    <text evidence="1">Belongs to the universal ribosomal protein uS7 family.</text>
</comment>
<evidence type="ECO:0000255" key="1">
    <source>
        <dbReference type="HAMAP-Rule" id="MF_00480"/>
    </source>
</evidence>
<evidence type="ECO:0000305" key="2"/>
<reference key="1">
    <citation type="journal article" date="2008" name="Chem. Biol. Interact.">
        <title>Extending the Bacillus cereus group genomics to putative food-borne pathogens of different toxicity.</title>
        <authorList>
            <person name="Lapidus A."/>
            <person name="Goltsman E."/>
            <person name="Auger S."/>
            <person name="Galleron N."/>
            <person name="Segurens B."/>
            <person name="Dossat C."/>
            <person name="Land M.L."/>
            <person name="Broussolle V."/>
            <person name="Brillard J."/>
            <person name="Guinebretiere M.-H."/>
            <person name="Sanchis V."/>
            <person name="Nguen-the C."/>
            <person name="Lereclus D."/>
            <person name="Richardson P."/>
            <person name="Wincker P."/>
            <person name="Weissenbach J."/>
            <person name="Ehrlich S.D."/>
            <person name="Sorokin A."/>
        </authorList>
    </citation>
    <scope>NUCLEOTIDE SEQUENCE [LARGE SCALE GENOMIC DNA]</scope>
    <source>
        <strain>KBAB4</strain>
    </source>
</reference>
<gene>
    <name evidence="1" type="primary">rpsG</name>
    <name type="ordered locus">BcerKBAB4_0101</name>
</gene>
<dbReference type="EMBL" id="CP000903">
    <property type="protein sequence ID" value="ABY41370.1"/>
    <property type="molecule type" value="Genomic_DNA"/>
</dbReference>
<dbReference type="RefSeq" id="WP_002063416.1">
    <property type="nucleotide sequence ID" value="NZ_CAKMRX030000129.1"/>
</dbReference>
<dbReference type="SMR" id="A9VP73"/>
<dbReference type="KEGG" id="bwe:BcerKBAB4_0101"/>
<dbReference type="eggNOG" id="COG0049">
    <property type="taxonomic scope" value="Bacteria"/>
</dbReference>
<dbReference type="HOGENOM" id="CLU_072226_1_1_9"/>
<dbReference type="Proteomes" id="UP000002154">
    <property type="component" value="Chromosome"/>
</dbReference>
<dbReference type="GO" id="GO:0015935">
    <property type="term" value="C:small ribosomal subunit"/>
    <property type="evidence" value="ECO:0007669"/>
    <property type="project" value="InterPro"/>
</dbReference>
<dbReference type="GO" id="GO:0019843">
    <property type="term" value="F:rRNA binding"/>
    <property type="evidence" value="ECO:0007669"/>
    <property type="project" value="UniProtKB-UniRule"/>
</dbReference>
<dbReference type="GO" id="GO:0003735">
    <property type="term" value="F:structural constituent of ribosome"/>
    <property type="evidence" value="ECO:0007669"/>
    <property type="project" value="InterPro"/>
</dbReference>
<dbReference type="GO" id="GO:0000049">
    <property type="term" value="F:tRNA binding"/>
    <property type="evidence" value="ECO:0007669"/>
    <property type="project" value="UniProtKB-UniRule"/>
</dbReference>
<dbReference type="GO" id="GO:0006412">
    <property type="term" value="P:translation"/>
    <property type="evidence" value="ECO:0007669"/>
    <property type="project" value="UniProtKB-UniRule"/>
</dbReference>
<dbReference type="CDD" id="cd14869">
    <property type="entry name" value="uS7_Bacteria"/>
    <property type="match status" value="1"/>
</dbReference>
<dbReference type="FunFam" id="1.10.455.10:FF:000001">
    <property type="entry name" value="30S ribosomal protein S7"/>
    <property type="match status" value="1"/>
</dbReference>
<dbReference type="Gene3D" id="1.10.455.10">
    <property type="entry name" value="Ribosomal protein S7 domain"/>
    <property type="match status" value="1"/>
</dbReference>
<dbReference type="HAMAP" id="MF_00480_B">
    <property type="entry name" value="Ribosomal_uS7_B"/>
    <property type="match status" value="1"/>
</dbReference>
<dbReference type="InterPro" id="IPR000235">
    <property type="entry name" value="Ribosomal_uS7"/>
</dbReference>
<dbReference type="InterPro" id="IPR005717">
    <property type="entry name" value="Ribosomal_uS7_bac/org-type"/>
</dbReference>
<dbReference type="InterPro" id="IPR020606">
    <property type="entry name" value="Ribosomal_uS7_CS"/>
</dbReference>
<dbReference type="InterPro" id="IPR023798">
    <property type="entry name" value="Ribosomal_uS7_dom"/>
</dbReference>
<dbReference type="InterPro" id="IPR036823">
    <property type="entry name" value="Ribosomal_uS7_dom_sf"/>
</dbReference>
<dbReference type="NCBIfam" id="TIGR01029">
    <property type="entry name" value="rpsG_bact"/>
    <property type="match status" value="1"/>
</dbReference>
<dbReference type="PANTHER" id="PTHR11205">
    <property type="entry name" value="RIBOSOMAL PROTEIN S7"/>
    <property type="match status" value="1"/>
</dbReference>
<dbReference type="Pfam" id="PF00177">
    <property type="entry name" value="Ribosomal_S7"/>
    <property type="match status" value="1"/>
</dbReference>
<dbReference type="PIRSF" id="PIRSF002122">
    <property type="entry name" value="RPS7p_RPS7a_RPS5e_RPS7o"/>
    <property type="match status" value="1"/>
</dbReference>
<dbReference type="SUPFAM" id="SSF47973">
    <property type="entry name" value="Ribosomal protein S7"/>
    <property type="match status" value="1"/>
</dbReference>
<dbReference type="PROSITE" id="PS00052">
    <property type="entry name" value="RIBOSOMAL_S7"/>
    <property type="match status" value="1"/>
</dbReference>
<keyword id="KW-0687">Ribonucleoprotein</keyword>
<keyword id="KW-0689">Ribosomal protein</keyword>
<keyword id="KW-0694">RNA-binding</keyword>
<keyword id="KW-0699">rRNA-binding</keyword>
<keyword id="KW-0820">tRNA-binding</keyword>